<organism>
    <name type="scientific">Streptococcus mutans serotype c (strain ATCC 700610 / UA159)</name>
    <dbReference type="NCBI Taxonomy" id="210007"/>
    <lineage>
        <taxon>Bacteria</taxon>
        <taxon>Bacillati</taxon>
        <taxon>Bacillota</taxon>
        <taxon>Bacilli</taxon>
        <taxon>Lactobacillales</taxon>
        <taxon>Streptococcaceae</taxon>
        <taxon>Streptococcus</taxon>
    </lineage>
</organism>
<sequence length="359" mass="40651">MNIYDQLQAVEDRYEELGELLSDPDVVSDTKRFMELSREEANSRETVAVYREYKQVVQNIADAQEMIKDASGDPELEEMAKEELKNSKVAKEEYEEKLRFLLLPKDPNDDKNIILEIRGAAGGDEAALFAGDLLNMYQKYAENQGWKFEVMEASANGVGGLKEVVAMVSGQSVYSKLKYESGAHRVQRVPVTESQGRVHTSTATVLVMPEVEEVEYEIDPKDLRVDIYHASGAGGQNVNKVATAVRIIHLPTNIKVEMQEERTQQKNRDKAMKIIRARVADHFAQIAQDEQDAERKSTVGTGDRSERIRTYNFPQNRVTDHRIGLTLQKLDSILSGKLDEVIDALILYDQTQKLEELNK</sequence>
<protein>
    <recommendedName>
        <fullName evidence="1">Peptide chain release factor 1</fullName>
        <shortName evidence="1">RF-1</shortName>
    </recommendedName>
</protein>
<comment type="function">
    <text evidence="1">Peptide chain release factor 1 directs the termination of translation in response to the peptide chain termination codons UAG and UAA.</text>
</comment>
<comment type="subcellular location">
    <subcellularLocation>
        <location evidence="1">Cytoplasm</location>
    </subcellularLocation>
</comment>
<comment type="PTM">
    <text evidence="1">Methylated by PrmC. Methylation increases the termination efficiency of RF1.</text>
</comment>
<comment type="similarity">
    <text evidence="1">Belongs to the prokaryotic/mitochondrial release factor family.</text>
</comment>
<reference key="1">
    <citation type="journal article" date="2002" name="Proc. Natl. Acad. Sci. U.S.A.">
        <title>Genome sequence of Streptococcus mutans UA159, a cariogenic dental pathogen.</title>
        <authorList>
            <person name="Ajdic D.J."/>
            <person name="McShan W.M."/>
            <person name="McLaughlin R.E."/>
            <person name="Savic G."/>
            <person name="Chang J."/>
            <person name="Carson M.B."/>
            <person name="Primeaux C."/>
            <person name="Tian R."/>
            <person name="Kenton S."/>
            <person name="Jia H.G."/>
            <person name="Lin S.P."/>
            <person name="Qian Y."/>
            <person name="Li S."/>
            <person name="Zhu H."/>
            <person name="Najar F.Z."/>
            <person name="Lai H."/>
            <person name="White J."/>
            <person name="Roe B.A."/>
            <person name="Ferretti J.J."/>
        </authorList>
    </citation>
    <scope>NUCLEOTIDE SEQUENCE [LARGE SCALE GENOMIC DNA]</scope>
    <source>
        <strain>ATCC 700610 / UA159</strain>
    </source>
</reference>
<proteinExistence type="evidence at protein level"/>
<name>RF1_STRMU</name>
<gene>
    <name evidence="1" type="primary">prfA</name>
    <name type="ordered locus">SMU_1085</name>
</gene>
<keyword id="KW-0002">3D-structure</keyword>
<keyword id="KW-0963">Cytoplasm</keyword>
<keyword id="KW-0488">Methylation</keyword>
<keyword id="KW-0648">Protein biosynthesis</keyword>
<keyword id="KW-1185">Reference proteome</keyword>
<dbReference type="EMBL" id="AE014133">
    <property type="protein sequence ID" value="AAN58783.1"/>
    <property type="molecule type" value="Genomic_DNA"/>
</dbReference>
<dbReference type="RefSeq" id="NP_721477.1">
    <property type="nucleotide sequence ID" value="NC_004350.2"/>
</dbReference>
<dbReference type="RefSeq" id="WP_002262255.1">
    <property type="nucleotide sequence ID" value="NC_004350.2"/>
</dbReference>
<dbReference type="PDB" id="1ZBT">
    <property type="method" value="X-ray"/>
    <property type="resolution" value="2.34 A"/>
    <property type="chains" value="A=1-359"/>
</dbReference>
<dbReference type="PDBsum" id="1ZBT"/>
<dbReference type="SMR" id="Q8DU64"/>
<dbReference type="STRING" id="210007.SMU_1085"/>
<dbReference type="DNASU" id="1029399"/>
<dbReference type="KEGG" id="smu:SMU_1085"/>
<dbReference type="PATRIC" id="fig|210007.7.peg.972"/>
<dbReference type="eggNOG" id="COG0216">
    <property type="taxonomic scope" value="Bacteria"/>
</dbReference>
<dbReference type="HOGENOM" id="CLU_036856_0_1_9"/>
<dbReference type="OrthoDB" id="9806673at2"/>
<dbReference type="PhylomeDB" id="Q8DU64"/>
<dbReference type="EvolutionaryTrace" id="Q8DU64"/>
<dbReference type="Proteomes" id="UP000002512">
    <property type="component" value="Chromosome"/>
</dbReference>
<dbReference type="GO" id="GO:0005737">
    <property type="term" value="C:cytoplasm"/>
    <property type="evidence" value="ECO:0007669"/>
    <property type="project" value="UniProtKB-SubCell"/>
</dbReference>
<dbReference type="GO" id="GO:0016149">
    <property type="term" value="F:translation release factor activity, codon specific"/>
    <property type="evidence" value="ECO:0007669"/>
    <property type="project" value="UniProtKB-UniRule"/>
</dbReference>
<dbReference type="FunFam" id="3.30.160.20:FF:000027">
    <property type="entry name" value="Peptide chain release factor 1"/>
    <property type="match status" value="1"/>
</dbReference>
<dbReference type="FunFam" id="3.30.70.1660:FF:000002">
    <property type="entry name" value="Peptide chain release factor 1"/>
    <property type="match status" value="1"/>
</dbReference>
<dbReference type="FunFam" id="3.30.70.1660:FF:000004">
    <property type="entry name" value="Peptide chain release factor 1"/>
    <property type="match status" value="1"/>
</dbReference>
<dbReference type="Gene3D" id="3.30.160.20">
    <property type="match status" value="1"/>
</dbReference>
<dbReference type="Gene3D" id="3.30.70.1660">
    <property type="match status" value="2"/>
</dbReference>
<dbReference type="Gene3D" id="6.10.140.1950">
    <property type="match status" value="1"/>
</dbReference>
<dbReference type="HAMAP" id="MF_00093">
    <property type="entry name" value="Rel_fac_1"/>
    <property type="match status" value="1"/>
</dbReference>
<dbReference type="InterPro" id="IPR005139">
    <property type="entry name" value="PCRF"/>
</dbReference>
<dbReference type="InterPro" id="IPR000352">
    <property type="entry name" value="Pep_chain_release_fac_I"/>
</dbReference>
<dbReference type="InterPro" id="IPR045853">
    <property type="entry name" value="Pep_chain_release_fac_I_sf"/>
</dbReference>
<dbReference type="InterPro" id="IPR050057">
    <property type="entry name" value="Prokaryotic/Mito_RF"/>
</dbReference>
<dbReference type="InterPro" id="IPR004373">
    <property type="entry name" value="RF-1"/>
</dbReference>
<dbReference type="NCBIfam" id="TIGR00019">
    <property type="entry name" value="prfA"/>
    <property type="match status" value="1"/>
</dbReference>
<dbReference type="NCBIfam" id="NF001859">
    <property type="entry name" value="PRK00591.1"/>
    <property type="match status" value="1"/>
</dbReference>
<dbReference type="PANTHER" id="PTHR43804">
    <property type="entry name" value="LD18447P"/>
    <property type="match status" value="1"/>
</dbReference>
<dbReference type="PANTHER" id="PTHR43804:SF7">
    <property type="entry name" value="LD18447P"/>
    <property type="match status" value="1"/>
</dbReference>
<dbReference type="Pfam" id="PF03462">
    <property type="entry name" value="PCRF"/>
    <property type="match status" value="1"/>
</dbReference>
<dbReference type="Pfam" id="PF00472">
    <property type="entry name" value="RF-1"/>
    <property type="match status" value="1"/>
</dbReference>
<dbReference type="SMART" id="SM00937">
    <property type="entry name" value="PCRF"/>
    <property type="match status" value="1"/>
</dbReference>
<dbReference type="SUPFAM" id="SSF75620">
    <property type="entry name" value="Release factor"/>
    <property type="match status" value="1"/>
</dbReference>
<dbReference type="PROSITE" id="PS00745">
    <property type="entry name" value="RF_PROK_I"/>
    <property type="match status" value="1"/>
</dbReference>
<accession>Q8DU64</accession>
<evidence type="ECO:0000255" key="1">
    <source>
        <dbReference type="HAMAP-Rule" id="MF_00093"/>
    </source>
</evidence>
<evidence type="ECO:0007829" key="2">
    <source>
        <dbReference type="PDB" id="1ZBT"/>
    </source>
</evidence>
<feature type="chain" id="PRO_0000177751" description="Peptide chain release factor 1">
    <location>
        <begin position="1"/>
        <end position="359"/>
    </location>
</feature>
<feature type="modified residue" description="N5-methylglutamine" evidence="1">
    <location>
        <position position="236"/>
    </location>
</feature>
<feature type="helix" evidence="2">
    <location>
        <begin position="3"/>
        <end position="16"/>
    </location>
</feature>
<feature type="helix" evidence="2">
    <location>
        <begin position="40"/>
        <end position="65"/>
    </location>
</feature>
<feature type="helix" evidence="2">
    <location>
        <begin position="75"/>
        <end position="99"/>
    </location>
</feature>
<feature type="turn" evidence="2">
    <location>
        <begin position="100"/>
        <end position="102"/>
    </location>
</feature>
<feature type="turn" evidence="2">
    <location>
        <begin position="107"/>
        <end position="110"/>
    </location>
</feature>
<feature type="strand" evidence="2">
    <location>
        <begin position="113"/>
        <end position="119"/>
    </location>
</feature>
<feature type="turn" evidence="2">
    <location>
        <begin position="121"/>
        <end position="123"/>
    </location>
</feature>
<feature type="helix" evidence="2">
    <location>
        <begin position="124"/>
        <end position="144"/>
    </location>
</feature>
<feature type="strand" evidence="2">
    <location>
        <begin position="147"/>
        <end position="155"/>
    </location>
</feature>
<feature type="strand" evidence="2">
    <location>
        <begin position="157"/>
        <end position="159"/>
    </location>
</feature>
<feature type="strand" evidence="2">
    <location>
        <begin position="161"/>
        <end position="170"/>
    </location>
</feature>
<feature type="helix" evidence="2">
    <location>
        <begin position="173"/>
        <end position="177"/>
    </location>
</feature>
<feature type="helix" evidence="2">
    <location>
        <begin position="178"/>
        <end position="180"/>
    </location>
</feature>
<feature type="strand" evidence="2">
    <location>
        <begin position="182"/>
        <end position="188"/>
    </location>
</feature>
<feature type="strand" evidence="2">
    <location>
        <begin position="199"/>
        <end position="209"/>
    </location>
</feature>
<feature type="helix" evidence="2">
    <location>
        <begin position="213"/>
        <end position="215"/>
    </location>
</feature>
<feature type="helix" evidence="2">
    <location>
        <begin position="220"/>
        <end position="222"/>
    </location>
</feature>
<feature type="strand" evidence="2">
    <location>
        <begin position="223"/>
        <end position="228"/>
    </location>
</feature>
<feature type="strand" evidence="2">
    <location>
        <begin position="244"/>
        <end position="249"/>
    </location>
</feature>
<feature type="turn" evidence="2">
    <location>
        <begin position="250"/>
        <end position="253"/>
    </location>
</feature>
<feature type="strand" evidence="2">
    <location>
        <begin position="254"/>
        <end position="258"/>
    </location>
</feature>
<feature type="strand" evidence="2">
    <location>
        <begin position="260"/>
        <end position="263"/>
    </location>
</feature>
<feature type="helix" evidence="2">
    <location>
        <begin position="264"/>
        <end position="290"/>
    </location>
</feature>
<feature type="strand" evidence="2">
    <location>
        <begin position="306"/>
        <end position="312"/>
    </location>
</feature>
<feature type="turn" evidence="2">
    <location>
        <begin position="313"/>
        <end position="316"/>
    </location>
</feature>
<feature type="strand" evidence="2">
    <location>
        <begin position="317"/>
        <end position="320"/>
    </location>
</feature>
<feature type="turn" evidence="2">
    <location>
        <begin position="321"/>
        <end position="324"/>
    </location>
</feature>
<feature type="strand" evidence="2">
    <location>
        <begin position="325"/>
        <end position="328"/>
    </location>
</feature>
<feature type="helix" evidence="2">
    <location>
        <begin position="330"/>
        <end position="334"/>
    </location>
</feature>
<feature type="helix" evidence="2">
    <location>
        <begin position="339"/>
        <end position="356"/>
    </location>
</feature>